<name>NIKR_PYRAB</name>
<feature type="chain" id="PRO_0000139310" description="Putative nickel-responsive regulator">
    <location>
        <begin position="1"/>
        <end position="138"/>
    </location>
</feature>
<feature type="binding site" evidence="1">
    <location>
        <position position="78"/>
    </location>
    <ligand>
        <name>Ni(2+)</name>
        <dbReference type="ChEBI" id="CHEBI:49786"/>
    </ligand>
</feature>
<feature type="binding site" evidence="1">
    <location>
        <position position="89"/>
    </location>
    <ligand>
        <name>Ni(2+)</name>
        <dbReference type="ChEBI" id="CHEBI:49786"/>
    </ligand>
</feature>
<feature type="binding site" evidence="1">
    <location>
        <position position="91"/>
    </location>
    <ligand>
        <name>Ni(2+)</name>
        <dbReference type="ChEBI" id="CHEBI:49786"/>
    </ligand>
</feature>
<feature type="binding site" evidence="1">
    <location>
        <position position="97"/>
    </location>
    <ligand>
        <name>Ni(2+)</name>
        <dbReference type="ChEBI" id="CHEBI:49786"/>
    </ligand>
</feature>
<reference key="1">
    <citation type="journal article" date="2003" name="Mol. Microbiol.">
        <title>An integrated analysis of the genome of the hyperthermophilic archaeon Pyrococcus abyssi.</title>
        <authorList>
            <person name="Cohen G.N."/>
            <person name="Barbe V."/>
            <person name="Flament D."/>
            <person name="Galperin M."/>
            <person name="Heilig R."/>
            <person name="Lecompte O."/>
            <person name="Poch O."/>
            <person name="Prieur D."/>
            <person name="Querellou J."/>
            <person name="Ripp R."/>
            <person name="Thierry J.-C."/>
            <person name="Van der Oost J."/>
            <person name="Weissenbach J."/>
            <person name="Zivanovic Y."/>
            <person name="Forterre P."/>
        </authorList>
    </citation>
    <scope>NUCLEOTIDE SEQUENCE [LARGE SCALE GENOMIC DNA]</scope>
    <source>
        <strain>GE5 / Orsay</strain>
    </source>
</reference>
<reference key="2">
    <citation type="journal article" date="2012" name="Curr. Microbiol.">
        <title>Re-annotation of two hyperthermophilic archaea Pyrococcus abyssi GE5 and Pyrococcus furiosus DSM 3638.</title>
        <authorList>
            <person name="Gao J."/>
            <person name="Wang J."/>
        </authorList>
    </citation>
    <scope>GENOME REANNOTATION</scope>
    <source>
        <strain>GE5 / Orsay</strain>
    </source>
</reference>
<organism>
    <name type="scientific">Pyrococcus abyssi (strain GE5 / Orsay)</name>
    <dbReference type="NCBI Taxonomy" id="272844"/>
    <lineage>
        <taxon>Archaea</taxon>
        <taxon>Methanobacteriati</taxon>
        <taxon>Methanobacteriota</taxon>
        <taxon>Thermococci</taxon>
        <taxon>Thermococcales</taxon>
        <taxon>Thermococcaceae</taxon>
        <taxon>Pyrococcus</taxon>
    </lineage>
</organism>
<gene>
    <name type="ordered locus">PYRAB14420</name>
    <name type="ORF">PAB0960</name>
</gene>
<evidence type="ECO:0000255" key="1">
    <source>
        <dbReference type="HAMAP-Rule" id="MF_00476"/>
    </source>
</evidence>
<keyword id="KW-0238">DNA-binding</keyword>
<keyword id="KW-0479">Metal-binding</keyword>
<keyword id="KW-0533">Nickel</keyword>
<keyword id="KW-0804">Transcription</keyword>
<keyword id="KW-0805">Transcription regulation</keyword>
<dbReference type="EMBL" id="AJ248287">
    <property type="protein sequence ID" value="CAB50347.1"/>
    <property type="molecule type" value="Genomic_DNA"/>
</dbReference>
<dbReference type="EMBL" id="HE613800">
    <property type="protein sequence ID" value="CCE70888.1"/>
    <property type="molecule type" value="Genomic_DNA"/>
</dbReference>
<dbReference type="PIR" id="F75056">
    <property type="entry name" value="F75056"/>
</dbReference>
<dbReference type="RefSeq" id="WP_010868557.1">
    <property type="nucleotide sequence ID" value="NC_000868.1"/>
</dbReference>
<dbReference type="SMR" id="Q9UYR5"/>
<dbReference type="STRING" id="272844.PAB0960"/>
<dbReference type="KEGG" id="pab:PAB0960"/>
<dbReference type="PATRIC" id="fig|272844.11.peg.1533"/>
<dbReference type="eggNOG" id="arCOG01008">
    <property type="taxonomic scope" value="Archaea"/>
</dbReference>
<dbReference type="HOGENOM" id="CLU_113319_1_2_2"/>
<dbReference type="OrthoDB" id="25654at2157"/>
<dbReference type="PhylomeDB" id="Q9UYR5"/>
<dbReference type="Proteomes" id="UP000000810">
    <property type="component" value="Chromosome"/>
</dbReference>
<dbReference type="Proteomes" id="UP000009139">
    <property type="component" value="Chromosome"/>
</dbReference>
<dbReference type="GO" id="GO:0003677">
    <property type="term" value="F:DNA binding"/>
    <property type="evidence" value="ECO:0007669"/>
    <property type="project" value="UniProtKB-KW"/>
</dbReference>
<dbReference type="GO" id="GO:0003700">
    <property type="term" value="F:DNA-binding transcription factor activity"/>
    <property type="evidence" value="ECO:0007669"/>
    <property type="project" value="UniProtKB-UniRule"/>
</dbReference>
<dbReference type="GO" id="GO:0016151">
    <property type="term" value="F:nickel cation binding"/>
    <property type="evidence" value="ECO:0007669"/>
    <property type="project" value="UniProtKB-UniRule"/>
</dbReference>
<dbReference type="GO" id="GO:0010045">
    <property type="term" value="P:response to nickel cation"/>
    <property type="evidence" value="ECO:0007669"/>
    <property type="project" value="InterPro"/>
</dbReference>
<dbReference type="CDD" id="cd22231">
    <property type="entry name" value="RHH_NikR_HicB-like"/>
    <property type="match status" value="1"/>
</dbReference>
<dbReference type="Gene3D" id="3.30.70.1150">
    <property type="entry name" value="ACT-like. Chain A, domain 2"/>
    <property type="match status" value="1"/>
</dbReference>
<dbReference type="Gene3D" id="1.10.1220.10">
    <property type="entry name" value="Met repressor-like"/>
    <property type="match status" value="1"/>
</dbReference>
<dbReference type="HAMAP" id="MF_00476">
    <property type="entry name" value="NikR"/>
    <property type="match status" value="1"/>
</dbReference>
<dbReference type="InterPro" id="IPR027271">
    <property type="entry name" value="Acetolactate_synth/TF_NikR_C"/>
</dbReference>
<dbReference type="InterPro" id="IPR045865">
    <property type="entry name" value="ACT-like_dom_sf"/>
</dbReference>
<dbReference type="InterPro" id="IPR013321">
    <property type="entry name" value="Arc_rbn_hlx_hlx"/>
</dbReference>
<dbReference type="InterPro" id="IPR002145">
    <property type="entry name" value="CopG"/>
</dbReference>
<dbReference type="InterPro" id="IPR050192">
    <property type="entry name" value="CopG/NikR_regulator"/>
</dbReference>
<dbReference type="InterPro" id="IPR022988">
    <property type="entry name" value="Ni_resp_reg_NikR"/>
</dbReference>
<dbReference type="InterPro" id="IPR010985">
    <property type="entry name" value="Ribbon_hlx_hlx"/>
</dbReference>
<dbReference type="InterPro" id="IPR014864">
    <property type="entry name" value="TF_NikR_Ni-bd_C"/>
</dbReference>
<dbReference type="NCBIfam" id="NF001884">
    <property type="entry name" value="PRK00630.1"/>
    <property type="match status" value="1"/>
</dbReference>
<dbReference type="NCBIfam" id="NF002169">
    <property type="entry name" value="PRK01002.1"/>
    <property type="match status" value="1"/>
</dbReference>
<dbReference type="NCBIfam" id="NF002815">
    <property type="entry name" value="PRK02967.1"/>
    <property type="match status" value="1"/>
</dbReference>
<dbReference type="NCBIfam" id="NF003381">
    <property type="entry name" value="PRK04460.1"/>
    <property type="match status" value="1"/>
</dbReference>
<dbReference type="PANTHER" id="PTHR34719">
    <property type="entry name" value="NICKEL-RESPONSIVE REGULATOR"/>
    <property type="match status" value="1"/>
</dbReference>
<dbReference type="PANTHER" id="PTHR34719:SF2">
    <property type="entry name" value="NICKEL-RESPONSIVE REGULATOR"/>
    <property type="match status" value="1"/>
</dbReference>
<dbReference type="Pfam" id="PF08753">
    <property type="entry name" value="NikR_C"/>
    <property type="match status" value="1"/>
</dbReference>
<dbReference type="Pfam" id="PF01402">
    <property type="entry name" value="RHH_1"/>
    <property type="match status" value="1"/>
</dbReference>
<dbReference type="SUPFAM" id="SSF55021">
    <property type="entry name" value="ACT-like"/>
    <property type="match status" value="1"/>
</dbReference>
<dbReference type="SUPFAM" id="SSF47598">
    <property type="entry name" value="Ribbon-helix-helix"/>
    <property type="match status" value="1"/>
</dbReference>
<sequence>MDLVRFSISIPAELLEKFDRIIEEIGYENRSEAIRDLIRDFIIRREWEVGNEEVAGTITIVYNHDEGDVVKELLDLQHEYLDEIISTLHVHMDEHNCLEVIVVKGKAKRIKMIASRLMSLKGVKHGKLVMTSTGKELL</sequence>
<accession>Q9UYR5</accession>
<accession>G8ZIK5</accession>
<protein>
    <recommendedName>
        <fullName evidence="1">Putative nickel-responsive regulator</fullName>
    </recommendedName>
</protein>
<comment type="function">
    <text evidence="1">Transcriptional regulator.</text>
</comment>
<comment type="cofactor">
    <cofactor evidence="1">
        <name>Ni(2+)</name>
        <dbReference type="ChEBI" id="CHEBI:49786"/>
    </cofactor>
    <text evidence="1">Binds 1 nickel ion per subunit.</text>
</comment>
<comment type="similarity">
    <text evidence="1">Belongs to the transcriptional regulatory CopG/NikR family.</text>
</comment>
<proteinExistence type="inferred from homology"/>